<gene>
    <name evidence="1" type="primary">ubiE</name>
    <name type="ordered locus">RF_0243</name>
</gene>
<comment type="function">
    <text evidence="1">Methyltransferase required for the conversion of demethylmenaquinol (DMKH2) to menaquinol (MKH2) and the conversion of 2-polyprenyl-6-methoxy-1,4-benzoquinol (DDMQH2) to 2-polyprenyl-3-methyl-6-methoxy-1,4-benzoquinol (DMQH2).</text>
</comment>
<comment type="catalytic activity">
    <reaction evidence="1">
        <text>a 2-demethylmenaquinol + S-adenosyl-L-methionine = a menaquinol + S-adenosyl-L-homocysteine + H(+)</text>
        <dbReference type="Rhea" id="RHEA:42640"/>
        <dbReference type="Rhea" id="RHEA-COMP:9539"/>
        <dbReference type="Rhea" id="RHEA-COMP:9563"/>
        <dbReference type="ChEBI" id="CHEBI:15378"/>
        <dbReference type="ChEBI" id="CHEBI:18151"/>
        <dbReference type="ChEBI" id="CHEBI:55437"/>
        <dbReference type="ChEBI" id="CHEBI:57856"/>
        <dbReference type="ChEBI" id="CHEBI:59789"/>
        <dbReference type="EC" id="2.1.1.163"/>
    </reaction>
</comment>
<comment type="catalytic activity">
    <reaction evidence="1">
        <text>a 2-methoxy-6-(all-trans-polyprenyl)benzene-1,4-diol + S-adenosyl-L-methionine = a 5-methoxy-2-methyl-3-(all-trans-polyprenyl)benzene-1,4-diol + S-adenosyl-L-homocysteine + H(+)</text>
        <dbReference type="Rhea" id="RHEA:28286"/>
        <dbReference type="Rhea" id="RHEA-COMP:10858"/>
        <dbReference type="Rhea" id="RHEA-COMP:10859"/>
        <dbReference type="ChEBI" id="CHEBI:15378"/>
        <dbReference type="ChEBI" id="CHEBI:57856"/>
        <dbReference type="ChEBI" id="CHEBI:59789"/>
        <dbReference type="ChEBI" id="CHEBI:84166"/>
        <dbReference type="ChEBI" id="CHEBI:84167"/>
        <dbReference type="EC" id="2.1.1.201"/>
    </reaction>
</comment>
<comment type="pathway">
    <text evidence="1">Quinol/quinone metabolism; menaquinone biosynthesis; menaquinol from 1,4-dihydroxy-2-naphthoate: step 2/2.</text>
</comment>
<comment type="pathway">
    <text evidence="1">Cofactor biosynthesis; ubiquinone biosynthesis.</text>
</comment>
<comment type="similarity">
    <text evidence="1">Belongs to the class I-like SAM-binding methyltransferase superfamily. MenG/UbiE family.</text>
</comment>
<feature type="chain" id="PRO_0000272374" description="Ubiquinone/menaquinone biosynthesis C-methyltransferase UbiE">
    <location>
        <begin position="1"/>
        <end position="248"/>
    </location>
</feature>
<feature type="binding site" evidence="1">
    <location>
        <position position="68"/>
    </location>
    <ligand>
        <name>S-adenosyl-L-methionine</name>
        <dbReference type="ChEBI" id="CHEBI:59789"/>
    </ligand>
</feature>
<feature type="binding site" evidence="1">
    <location>
        <position position="92"/>
    </location>
    <ligand>
        <name>S-adenosyl-L-methionine</name>
        <dbReference type="ChEBI" id="CHEBI:59789"/>
    </ligand>
</feature>
<evidence type="ECO:0000255" key="1">
    <source>
        <dbReference type="HAMAP-Rule" id="MF_01813"/>
    </source>
</evidence>
<reference key="1">
    <citation type="journal article" date="2005" name="PLoS Biol.">
        <title>The genome sequence of Rickettsia felis identifies the first putative conjugative plasmid in an obligate intracellular parasite.</title>
        <authorList>
            <person name="Ogata H."/>
            <person name="Renesto P."/>
            <person name="Audic S."/>
            <person name="Robert C."/>
            <person name="Blanc G."/>
            <person name="Fournier P.-E."/>
            <person name="Parinello H."/>
            <person name="Claverie J.-M."/>
            <person name="Raoult D."/>
        </authorList>
    </citation>
    <scope>NUCLEOTIDE SEQUENCE [LARGE SCALE GENOMIC DNA]</scope>
    <source>
        <strain>ATCC VR-1525 / URRWXCal2</strain>
    </source>
</reference>
<keyword id="KW-0474">Menaquinone biosynthesis</keyword>
<keyword id="KW-0489">Methyltransferase</keyword>
<keyword id="KW-0949">S-adenosyl-L-methionine</keyword>
<keyword id="KW-0808">Transferase</keyword>
<keyword id="KW-0831">Ubiquinone biosynthesis</keyword>
<organism>
    <name type="scientific">Rickettsia felis (strain ATCC VR-1525 / URRWXCal2)</name>
    <name type="common">Rickettsia azadi</name>
    <dbReference type="NCBI Taxonomy" id="315456"/>
    <lineage>
        <taxon>Bacteria</taxon>
        <taxon>Pseudomonadati</taxon>
        <taxon>Pseudomonadota</taxon>
        <taxon>Alphaproteobacteria</taxon>
        <taxon>Rickettsiales</taxon>
        <taxon>Rickettsiaceae</taxon>
        <taxon>Rickettsieae</taxon>
        <taxon>Rickettsia</taxon>
        <taxon>spotted fever group</taxon>
    </lineage>
</organism>
<name>UBIE_RICFE</name>
<dbReference type="EC" id="2.1.1.163" evidence="1"/>
<dbReference type="EC" id="2.1.1.201" evidence="1"/>
<dbReference type="EMBL" id="CP000053">
    <property type="protein sequence ID" value="AAY61094.1"/>
    <property type="molecule type" value="Genomic_DNA"/>
</dbReference>
<dbReference type="SMR" id="Q4UMW4"/>
<dbReference type="STRING" id="315456.RF_0243"/>
<dbReference type="KEGG" id="rfe:RF_0243"/>
<dbReference type="eggNOG" id="COG2226">
    <property type="taxonomic scope" value="Bacteria"/>
</dbReference>
<dbReference type="HOGENOM" id="CLU_037990_0_1_5"/>
<dbReference type="OrthoDB" id="9808140at2"/>
<dbReference type="UniPathway" id="UPA00079">
    <property type="reaction ID" value="UER00169"/>
</dbReference>
<dbReference type="UniPathway" id="UPA00232"/>
<dbReference type="Proteomes" id="UP000008548">
    <property type="component" value="Chromosome"/>
</dbReference>
<dbReference type="GO" id="GO:0008425">
    <property type="term" value="F:2-methoxy-6-polyprenyl-1,4-benzoquinol methyltransferase activity"/>
    <property type="evidence" value="ECO:0007669"/>
    <property type="project" value="UniProtKB-UniRule"/>
</dbReference>
<dbReference type="GO" id="GO:0043770">
    <property type="term" value="F:demethylmenaquinone methyltransferase activity"/>
    <property type="evidence" value="ECO:0007669"/>
    <property type="project" value="UniProtKB-UniRule"/>
</dbReference>
<dbReference type="GO" id="GO:0009060">
    <property type="term" value="P:aerobic respiration"/>
    <property type="evidence" value="ECO:0007669"/>
    <property type="project" value="UniProtKB-UniRule"/>
</dbReference>
<dbReference type="GO" id="GO:0009234">
    <property type="term" value="P:menaquinone biosynthetic process"/>
    <property type="evidence" value="ECO:0007669"/>
    <property type="project" value="UniProtKB-UniRule"/>
</dbReference>
<dbReference type="GO" id="GO:0032259">
    <property type="term" value="P:methylation"/>
    <property type="evidence" value="ECO:0007669"/>
    <property type="project" value="UniProtKB-KW"/>
</dbReference>
<dbReference type="CDD" id="cd02440">
    <property type="entry name" value="AdoMet_MTases"/>
    <property type="match status" value="1"/>
</dbReference>
<dbReference type="FunFam" id="3.40.50.150:FF:000250">
    <property type="entry name" value="Ubiquinone/menaquinone biosynthesis C-methyltransferase UbiE"/>
    <property type="match status" value="1"/>
</dbReference>
<dbReference type="Gene3D" id="3.40.50.150">
    <property type="entry name" value="Vaccinia Virus protein VP39"/>
    <property type="match status" value="1"/>
</dbReference>
<dbReference type="HAMAP" id="MF_01813">
    <property type="entry name" value="MenG_UbiE_methyltr"/>
    <property type="match status" value="1"/>
</dbReference>
<dbReference type="InterPro" id="IPR029063">
    <property type="entry name" value="SAM-dependent_MTases_sf"/>
</dbReference>
<dbReference type="InterPro" id="IPR004033">
    <property type="entry name" value="UbiE/COQ5_MeTrFase"/>
</dbReference>
<dbReference type="InterPro" id="IPR023576">
    <property type="entry name" value="UbiE/COQ5_MeTrFase_CS"/>
</dbReference>
<dbReference type="NCBIfam" id="TIGR01934">
    <property type="entry name" value="MenG_MenH_UbiE"/>
    <property type="match status" value="1"/>
</dbReference>
<dbReference type="NCBIfam" id="NF001242">
    <property type="entry name" value="PRK00216.1-3"/>
    <property type="match status" value="1"/>
</dbReference>
<dbReference type="NCBIfam" id="NF001244">
    <property type="entry name" value="PRK00216.1-5"/>
    <property type="match status" value="1"/>
</dbReference>
<dbReference type="PANTHER" id="PTHR43591:SF24">
    <property type="entry name" value="2-METHOXY-6-POLYPRENYL-1,4-BENZOQUINOL METHYLASE, MITOCHONDRIAL"/>
    <property type="match status" value="1"/>
</dbReference>
<dbReference type="PANTHER" id="PTHR43591">
    <property type="entry name" value="METHYLTRANSFERASE"/>
    <property type="match status" value="1"/>
</dbReference>
<dbReference type="Pfam" id="PF01209">
    <property type="entry name" value="Ubie_methyltran"/>
    <property type="match status" value="1"/>
</dbReference>
<dbReference type="SUPFAM" id="SSF53335">
    <property type="entry name" value="S-adenosyl-L-methionine-dependent methyltransferases"/>
    <property type="match status" value="1"/>
</dbReference>
<dbReference type="PROSITE" id="PS51608">
    <property type="entry name" value="SAM_MT_UBIE"/>
    <property type="match status" value="1"/>
</dbReference>
<dbReference type="PROSITE" id="PS01183">
    <property type="entry name" value="UBIE_1"/>
    <property type="match status" value="1"/>
</dbReference>
<dbReference type="PROSITE" id="PS01184">
    <property type="entry name" value="UBIE_2"/>
    <property type="match status" value="1"/>
</dbReference>
<protein>
    <recommendedName>
        <fullName evidence="1">Ubiquinone/menaquinone biosynthesis C-methyltransferase UbiE</fullName>
        <ecNumber evidence="1">2.1.1.163</ecNumber>
        <ecNumber evidence="1">2.1.1.201</ecNumber>
    </recommendedName>
    <alternativeName>
        <fullName evidence="1">2-methoxy-6-polyprenyl-1,4-benzoquinol methylase</fullName>
    </alternativeName>
    <alternativeName>
        <fullName evidence="1">Demethylmenaquinone methyltransferase</fullName>
    </alternativeName>
</protein>
<sequence>MNQTNFGFKKVDYTKKQGLVNSVFSNVADKYDLMNDLMSFGLHRLWKDEFSRQIPNLNSHILDVASGSGDIALKLAKKARDRGNNIALTLSDINEEMLKNAKKKAIDLNLFQNLKFTVASAEELPFSDNSFDYYTIAFGIRNVPDINKALKEAYRVLKPMGKFICLEFSKVKESYFKDFYKFYSFSIIPTIGQAITGNKEAYEYLVESIELFPSQDEFRIMLKEAGFEEVSYKNLSGGIVAIHSAYKI</sequence>
<accession>Q4UMW4</accession>
<proteinExistence type="inferred from homology"/>